<keyword id="KW-0175">Coiled coil</keyword>
<keyword id="KW-0217">Developmental protein</keyword>
<keyword id="KW-0903">Direct protein sequencing</keyword>
<keyword id="KW-0403">Intermediate filament</keyword>
<keyword id="KW-1017">Isopeptide bond</keyword>
<keyword id="KW-0524">Neurogenesis</keyword>
<keyword id="KW-0597">Phosphoprotein</keyword>
<keyword id="KW-1185">Reference proteome</keyword>
<keyword id="KW-0832">Ubl conjugation</keyword>
<organism>
    <name type="scientific">Mesocricetus auratus</name>
    <name type="common">Golden hamster</name>
    <dbReference type="NCBI Taxonomy" id="10036"/>
    <lineage>
        <taxon>Eukaryota</taxon>
        <taxon>Metazoa</taxon>
        <taxon>Chordata</taxon>
        <taxon>Craniata</taxon>
        <taxon>Vertebrata</taxon>
        <taxon>Euteleostomi</taxon>
        <taxon>Mammalia</taxon>
        <taxon>Eutheria</taxon>
        <taxon>Euarchontoglires</taxon>
        <taxon>Glires</taxon>
        <taxon>Rodentia</taxon>
        <taxon>Myomorpha</taxon>
        <taxon>Muroidea</taxon>
        <taxon>Cricetidae</taxon>
        <taxon>Cricetinae</taxon>
        <taxon>Mesocricetus</taxon>
    </lineage>
</organism>
<evidence type="ECO:0000250" key="1"/>
<evidence type="ECO:0000250" key="2">
    <source>
        <dbReference type="UniProtKB" id="P21263"/>
    </source>
</evidence>
<evidence type="ECO:0000250" key="3">
    <source>
        <dbReference type="UniProtKB" id="P48681"/>
    </source>
</evidence>
<evidence type="ECO:0000250" key="4">
    <source>
        <dbReference type="UniProtKB" id="Q6P5H2"/>
    </source>
</evidence>
<evidence type="ECO:0000255" key="5"/>
<evidence type="ECO:0000255" key="6">
    <source>
        <dbReference type="PROSITE-ProRule" id="PRU01188"/>
    </source>
</evidence>
<evidence type="ECO:0000256" key="7">
    <source>
        <dbReference type="SAM" id="MobiDB-lite"/>
    </source>
</evidence>
<evidence type="ECO:0000269" key="8">
    <source>
    </source>
</evidence>
<evidence type="ECO:0000303" key="9">
    <source>
    </source>
</evidence>
<evidence type="ECO:0000305" key="10"/>
<evidence type="ECO:0000312" key="11">
    <source>
        <dbReference type="EMBL" id="AAC98312.1"/>
    </source>
</evidence>
<protein>
    <recommendedName>
        <fullName evidence="11">Nestin</fullName>
    </recommendedName>
</protein>
<dbReference type="EMBL" id="AF110498">
    <property type="protein sequence ID" value="AAC98312.1"/>
    <property type="molecule type" value="mRNA"/>
</dbReference>
<dbReference type="PIR" id="T34518">
    <property type="entry name" value="T34518"/>
</dbReference>
<dbReference type="SMR" id="Q9Z1Q1"/>
<dbReference type="STRING" id="10036.ENSMAUP00000001445"/>
<dbReference type="Proteomes" id="UP000189706">
    <property type="component" value="Unplaced"/>
</dbReference>
<dbReference type="GO" id="GO:0005882">
    <property type="term" value="C:intermediate filament"/>
    <property type="evidence" value="ECO:0007669"/>
    <property type="project" value="UniProtKB-KW"/>
</dbReference>
<dbReference type="GO" id="GO:0031730">
    <property type="term" value="F:CCR5 chemokine receptor binding"/>
    <property type="evidence" value="ECO:0007669"/>
    <property type="project" value="TreeGrafter"/>
</dbReference>
<dbReference type="GO" id="GO:0019215">
    <property type="term" value="F:intermediate filament binding"/>
    <property type="evidence" value="ECO:0000314"/>
    <property type="project" value="UniProtKB"/>
</dbReference>
<dbReference type="GO" id="GO:0007420">
    <property type="term" value="P:brain development"/>
    <property type="evidence" value="ECO:0000250"/>
    <property type="project" value="UniProtKB"/>
</dbReference>
<dbReference type="GO" id="GO:0031076">
    <property type="term" value="P:embryonic camera-type eye development"/>
    <property type="evidence" value="ECO:0000250"/>
    <property type="project" value="UniProtKB"/>
</dbReference>
<dbReference type="GO" id="GO:0030844">
    <property type="term" value="P:positive regulation of intermediate filament depolymerization"/>
    <property type="evidence" value="ECO:0000250"/>
    <property type="project" value="UniProtKB"/>
</dbReference>
<dbReference type="GO" id="GO:2000179">
    <property type="term" value="P:positive regulation of neural precursor cell proliferation"/>
    <property type="evidence" value="ECO:0000250"/>
    <property type="project" value="UniProtKB"/>
</dbReference>
<dbReference type="FunFam" id="1.20.5.170:FF:000081">
    <property type="entry name" value="Nestin"/>
    <property type="match status" value="1"/>
</dbReference>
<dbReference type="Gene3D" id="1.20.5.170">
    <property type="match status" value="1"/>
</dbReference>
<dbReference type="InterPro" id="IPR018039">
    <property type="entry name" value="IF_conserved"/>
</dbReference>
<dbReference type="InterPro" id="IPR039008">
    <property type="entry name" value="IF_rod_dom"/>
</dbReference>
<dbReference type="InterPro" id="IPR031211">
    <property type="entry name" value="Nestin"/>
</dbReference>
<dbReference type="PANTHER" id="PTHR47051">
    <property type="entry name" value="NESTIN"/>
    <property type="match status" value="1"/>
</dbReference>
<dbReference type="PANTHER" id="PTHR47051:SF1">
    <property type="entry name" value="NESTIN"/>
    <property type="match status" value="1"/>
</dbReference>
<dbReference type="SUPFAM" id="SSF64593">
    <property type="entry name" value="Intermediate filament protein, coiled coil region"/>
    <property type="match status" value="1"/>
</dbReference>
<dbReference type="PROSITE" id="PS00226">
    <property type="entry name" value="IF_ROD_1"/>
    <property type="match status" value="1"/>
</dbReference>
<dbReference type="PROSITE" id="PS51842">
    <property type="entry name" value="IF_ROD_2"/>
    <property type="match status" value="1"/>
</dbReference>
<proteinExistence type="evidence at protein level"/>
<reference evidence="10 11" key="1">
    <citation type="journal article" date="1999" name="J. Biol. Chem.">
        <title>A high molecular weight intermediate filament-associated protein in BHK-21 cells is nestin, a type VI intermediate filament protein. Limited co-assembly in vitro to form heteropolymers with type III vimentin and type IV alpha-internexin.</title>
        <authorList>
            <person name="Steinert P.M."/>
            <person name="Chou Y.H."/>
            <person name="Prahlad V."/>
            <person name="Parry D.A."/>
            <person name="Marekov L.N."/>
            <person name="Wu K.C."/>
            <person name="Jang S.I."/>
            <person name="Goldman R.D."/>
        </authorList>
    </citation>
    <scope>NUCLEOTIDE SEQUENCE [MRNA] OF 15-1818</scope>
    <scope>PROTEIN SEQUENCE OF 1-14; 204-214; 224-240; 505-520; 527-540 AND 752-769</scope>
    <scope>SUBUNIT</scope>
    <source>
        <tissue evidence="8">Kidney</tissue>
    </source>
</reference>
<name>NEST_MESAU</name>
<comment type="function">
    <text evidence="1">Required for brain and eye development. Promotes the disassembly of phosphorylated vimentin intermediate filaments (IF) during mitosis and may play a role in the trafficking and distribution of IF proteins and other cellular factors to daughter cells during progenitor cell division. Required for survival, renewal and mitogen-stimulated proliferation of neural progenitor cells (By similarity).</text>
</comment>
<comment type="subunit">
    <text evidence="2 8">Interacts with FHOD3 (By similarity). Forms homodimers and homotetramers in vitro. In mixtures with other intermediate filament proteins such as vimentin and alpha-internexin, preferentially forms heterodimers which can assemble to form intermediate filaments if nestin does not exceed 25%.</text>
</comment>
<comment type="PTM">
    <text evidence="1">Constitutively phosphorylated. This increases during mitosis when the cytoplasmic intermediate filament network is reorganized (By similarity).</text>
</comment>
<comment type="similarity">
    <text evidence="6">Belongs to the intermediate filament family.</text>
</comment>
<sequence length="1818" mass="200577">WREKLEAEVQRQNLYQERVAHMESSLGQARERLGRAVRGAREGRLELQQLQAERDGLQERREALEQRLEGRWQDRLQATEKFQLAVEALEQEKQGLQSQIAQILEGGQQLAHLKMSLSLEVATYRTLLEAENSRLQTPGRSSQASLGFQDPKLKLRFLGTPENQHLGSVLPVLSPTPLPSPLPDTLETPVTAFLKTQEFLQARIPTLASTPIPPMTEAPCLAKAEVRAQDAPLSLLQTQGERQQAPEPLWAKATASVSTGVLTELEEAGGQQPGHFPEDATASAPSLSPHHPVLEAKDGDSTESRGSSIFQEDEGQIWELVEKEAAIELKVESSLAQETQEDGLHTEEIQDSQGPLQKETLEALGEEPLMSLKIQNHETPGKENCNSLRSVDENQGTLKSPEEEKQTLLKSLEEKDVEVEKTLEKGVPELSKPLGKEDPRIEDQELMSPEGTLETLSFIGKRNEEVVRSSEEENIESLAAFKKESQHPLGCPEEEIQRVERLIEKEGQESLSSPEEEDQETDRPLEKENGEPLKPVEEEDQLFETLIEKEGQESLSSPEEEDQETDRPLEKEEDQLVERLVEKEGQESLSSPEEEDQETDRPLEKENGEPLKPVEEEDQLFETLIEKEGQESLSSPEEEDQETDRPLEKEEDQLVERLVEKEGQESLSSPEEEDQETDRPLEKEEDQLVETLIEKQGQECLSSPEEEDQETDRPLEKEEDQRVERLIEKEGQESLSSPEEEDQETYRLLEKENGEPLKPVEEEDQRVERLIEKEDQESLSSLKEEDQRIVKTLERENWESLRSLDENLDTVMPLESKNQKPLKSLEAEEEQRIVKPLEKVSQDSIGSLEKENVELLRSLEDDQITESLLKKGTQESLESHEDRNQETQDPQRFLEEEGQGIVKQLEKENQGFLGSLEEEKVVKRSLERENHEPLSSVEKDWVTESLLERESQDSGKSLEGQEAFRCLGKEDPESLQFPEVQDQEIQRSLQQETQQTLGALGDEQMASEPPEKVGPELLKFLGNGQEIVRSLEEQNQESLVSVKETSVETAKSSDMEDIEPLKSADEDLEIINSAGAQESLWSMEVTRETTRPLEKEVQESLGFVGGNQEILRPLERGNEELGSLGKWNLEAVDSPEAVEEGRQPLGEEACLEMGEHQEPPRSLGEVEQGLPGSGNQQKWEDRAVENAAADQGPTLGRTGIESEDEAELPLSGQGEKEEDAEERELQLDAMGEAWSLASSEPQEPRVPSEGGSAGAPQGLEGQSEQVGVLGVPVGQGMPEVTEPLLQEDVAQAGKRDPIELTLGSDAATRAGLGLEQEVAGSGGSRHLAREEAIHPSLGEESVEAKIAHDLEGPGKEPKEAGALESEISELPRTSSDVLESKGCKQSEPVLGWAVEEASVEASDHEGSDAPEPRPSETEGDEGAQAALAPPGPKLMEPCSPTPILKDAYEWQPQAEGTRETGRQLEGGSASLERVEDEQEFGLGGIPEGLQDWEESREESEADELGETLPDSTPLGLYLRSPTSPKWDQAGEQRLSPQGEARKEGWGPAVPAAQGLSNPPGEEERGHDSDLSSEEFEDLGTEASLLPGLPKEVADHLGQVPPGPEPECWDQGGESDGFADEEESGEEGEEEEHEDGTESGAQWWGSGPSKVQHVTQRGDLQEHESVGISGPWDDGWRGAAAGISVTGLETESQDSAEPSGSEVSESVSSEGEDQAPDHLDTPQGVTNVVPGAGDTFGISGQAPNLESEHMNGRLENGLEQSEGQGVLDRHQDQGHPSQQQEVGALKAPLLGSPVHRGPSQSLEFPLSGADRDSWSSGED</sequence>
<gene>
    <name evidence="4" type="primary">NES</name>
</gene>
<accession>Q9Z1Q1</accession>
<feature type="chain" id="PRO_0000403464" description="Nestin">
    <location>
        <begin position="1" status="less than"/>
        <end position="1818"/>
    </location>
</feature>
<feature type="domain" description="IF rod" evidence="6">
    <location>
        <begin position="1" status="less than"/>
        <end position="135"/>
    </location>
</feature>
<feature type="region of interest" description="Coil 1B" evidence="5">
    <location>
        <begin position="1" status="less than"/>
        <end position="14" status="greater than"/>
    </location>
</feature>
<feature type="region of interest" description="Linker 2" evidence="5">
    <location>
        <begin position="15"/>
        <end position="17"/>
    </location>
</feature>
<feature type="region of interest" description="Coil 2B" evidence="5">
    <location>
        <begin position="18"/>
        <end position="135"/>
    </location>
</feature>
<feature type="region of interest" description="Tail" evidence="5">
    <location>
        <begin position="136"/>
        <end position="1818"/>
    </location>
</feature>
<feature type="region of interest" description="Disordered" evidence="7">
    <location>
        <begin position="266"/>
        <end position="309"/>
    </location>
</feature>
<feature type="region of interest" description="Disordered" evidence="7">
    <location>
        <begin position="336"/>
        <end position="355"/>
    </location>
</feature>
<feature type="region of interest" description="Disordered" evidence="7">
    <location>
        <begin position="377"/>
        <end position="451"/>
    </location>
</feature>
<feature type="region of interest" description="Disordered" evidence="7">
    <location>
        <begin position="480"/>
        <end position="787"/>
    </location>
</feature>
<feature type="region of interest" description="Disordered" evidence="7">
    <location>
        <begin position="866"/>
        <end position="900"/>
    </location>
</feature>
<feature type="region of interest" description="Disordered" evidence="7">
    <location>
        <begin position="945"/>
        <end position="998"/>
    </location>
</feature>
<feature type="region of interest" description="Disordered" evidence="7">
    <location>
        <begin position="1134"/>
        <end position="1262"/>
    </location>
</feature>
<feature type="region of interest" description="Disordered" evidence="7">
    <location>
        <begin position="1334"/>
        <end position="1818"/>
    </location>
</feature>
<feature type="compositionally biased region" description="Basic and acidic residues" evidence="7">
    <location>
        <begin position="292"/>
        <end position="303"/>
    </location>
</feature>
<feature type="compositionally biased region" description="Polar residues" evidence="7">
    <location>
        <begin position="382"/>
        <end position="398"/>
    </location>
</feature>
<feature type="compositionally biased region" description="Basic and acidic residues" evidence="7">
    <location>
        <begin position="400"/>
        <end position="427"/>
    </location>
</feature>
<feature type="compositionally biased region" description="Basic and acidic residues" evidence="7">
    <location>
        <begin position="434"/>
        <end position="443"/>
    </location>
</feature>
<feature type="compositionally biased region" description="Basic and acidic residues" evidence="7">
    <location>
        <begin position="495"/>
        <end position="508"/>
    </location>
</feature>
<feature type="compositionally biased region" description="Basic and acidic residues" evidence="7">
    <location>
        <begin position="521"/>
        <end position="536"/>
    </location>
</feature>
<feature type="compositionally biased region" description="Basic and acidic residues" evidence="7">
    <location>
        <begin position="565"/>
        <end position="586"/>
    </location>
</feature>
<feature type="compositionally biased region" description="Basic and acidic residues" evidence="7">
    <location>
        <begin position="599"/>
        <end position="614"/>
    </location>
</feature>
<feature type="compositionally biased region" description="Basic and acidic residues" evidence="7">
    <location>
        <begin position="643"/>
        <end position="664"/>
    </location>
</feature>
<feature type="compositionally biased region" description="Basic and acidic residues" evidence="7">
    <location>
        <begin position="711"/>
        <end position="732"/>
    </location>
</feature>
<feature type="compositionally biased region" description="Basic and acidic residues" evidence="7">
    <location>
        <begin position="744"/>
        <end position="773"/>
    </location>
</feature>
<feature type="compositionally biased region" description="Basic and acidic residues" evidence="7">
    <location>
        <begin position="868"/>
        <end position="886"/>
    </location>
</feature>
<feature type="compositionally biased region" description="Polar residues" evidence="7">
    <location>
        <begin position="986"/>
        <end position="997"/>
    </location>
</feature>
<feature type="compositionally biased region" description="Basic and acidic residues" evidence="7">
    <location>
        <begin position="1342"/>
        <end position="1361"/>
    </location>
</feature>
<feature type="compositionally biased region" description="Basic and acidic residues" evidence="7">
    <location>
        <begin position="1401"/>
        <end position="1416"/>
    </location>
</feature>
<feature type="compositionally biased region" description="Acidic residues" evidence="7">
    <location>
        <begin position="1490"/>
        <end position="1505"/>
    </location>
</feature>
<feature type="compositionally biased region" description="Acidic residues" evidence="7">
    <location>
        <begin position="1570"/>
        <end position="1579"/>
    </location>
</feature>
<feature type="compositionally biased region" description="Acidic residues" evidence="7">
    <location>
        <begin position="1616"/>
        <end position="1636"/>
    </location>
</feature>
<feature type="compositionally biased region" description="Polar residues" evidence="7">
    <location>
        <begin position="1686"/>
        <end position="1697"/>
    </location>
</feature>
<feature type="compositionally biased region" description="Low complexity" evidence="7">
    <location>
        <begin position="1698"/>
        <end position="1708"/>
    </location>
</feature>
<feature type="modified residue" description="Phosphoserine" evidence="3">
    <location>
        <position position="133"/>
    </location>
</feature>
<feature type="modified residue" description="Phosphothreonine" evidence="3">
    <location>
        <position position="137"/>
    </location>
</feature>
<feature type="modified residue" description="Phosphothreonine" evidence="3">
    <location>
        <position position="160"/>
    </location>
</feature>
<feature type="modified residue" description="Phosphoserine" evidence="3">
    <location>
        <position position="180"/>
    </location>
</feature>
<feature type="modified residue" description="Phosphothreonine" evidence="3">
    <location>
        <position position="210"/>
    </location>
</feature>
<feature type="modified residue" description="Phosphoserine" evidence="3">
    <location>
        <position position="288"/>
    </location>
</feature>
<feature type="modified residue" description="Phosphoserine" evidence="3">
    <location>
        <position position="390"/>
    </location>
</feature>
<feature type="modified residue" description="Phosphoserine" evidence="3">
    <location>
        <position position="400"/>
    </location>
</feature>
<feature type="modified residue" description="Phosphoserine" evidence="4">
    <location>
        <position position="448"/>
    </location>
</feature>
<feature type="modified residue" description="Phosphoserine" evidence="3">
    <location>
        <position position="513"/>
    </location>
</feature>
<feature type="modified residue" description="Phosphoserine" evidence="4">
    <location>
        <position position="591"/>
    </location>
</feature>
<feature type="modified residue" description="Phosphoserine" evidence="4">
    <location>
        <position position="737"/>
    </location>
</feature>
<feature type="modified residue" description="Phosphoserine" evidence="3">
    <location>
        <position position="803"/>
    </location>
</feature>
<feature type="modified residue" description="Phosphoserine" evidence="4">
    <location>
        <position position="824"/>
    </location>
</feature>
<feature type="modified residue" description="Phosphoserine" evidence="4">
    <location>
        <position position="915"/>
    </location>
</feature>
<feature type="modified residue" description="Phosphoserine" evidence="2">
    <location>
        <position position="957"/>
    </location>
</feature>
<feature type="modified residue" description="Phosphoserine" evidence="3">
    <location>
        <position position="1052"/>
    </location>
</feature>
<feature type="modified residue" description="Phosphoserine" evidence="3">
    <location>
        <position position="1063"/>
    </location>
</feature>
<feature type="modified residue" description="Phosphoserine" evidence="2">
    <location>
        <position position="1073"/>
    </location>
</feature>
<feature type="modified residue" description="Phosphoserine" evidence="3">
    <location>
        <position position="1123"/>
    </location>
</feature>
<feature type="modified residue" description="Phosphoserine" evidence="3">
    <location>
        <position position="1134"/>
    </location>
</feature>
<feature type="modified residue" description="Phosphoserine" evidence="3">
    <location>
        <position position="1162"/>
    </location>
</feature>
<feature type="modified residue" description="Phosphoserine" evidence="3">
    <location>
        <position position="1238"/>
    </location>
</feature>
<feature type="modified residue" description="Phosphoserine" evidence="3">
    <location>
        <position position="1495"/>
    </location>
</feature>
<feature type="modified residue" description="Phosphoserine" evidence="3">
    <location>
        <position position="1499"/>
    </location>
</feature>
<feature type="modified residue" description="Phosphoserine" evidence="4">
    <location>
        <position position="1523"/>
    </location>
</feature>
<feature type="modified residue" description="Phosphoserine" evidence="3">
    <location>
        <position position="1614"/>
    </location>
</feature>
<feature type="modified residue" description="Phosphoserine" evidence="3">
    <location>
        <position position="1623"/>
    </location>
</feature>
<feature type="modified residue" description="Phosphoserine" evidence="3">
    <location>
        <position position="1698"/>
    </location>
</feature>
<feature type="modified residue" description="Phosphoserine" evidence="3">
    <location>
        <position position="1700"/>
    </location>
</feature>
<feature type="modified residue" description="Phosphoserine" evidence="4">
    <location>
        <position position="1791"/>
    </location>
</feature>
<feature type="modified residue" description="Phosphoserine" evidence="3">
    <location>
        <position position="1814"/>
    </location>
</feature>
<feature type="modified residue" description="Phosphoserine" evidence="3">
    <location>
        <position position="1815"/>
    </location>
</feature>
<feature type="cross-link" description="Glycyl lysine isopeptide (Lys-Gly) (interchain with G-Cter in SUMO1); alternate" evidence="3">
    <location>
        <position position="1043"/>
    </location>
</feature>
<feature type="cross-link" description="Glycyl lysine isopeptide (Lys-Gly) (interchain with G-Cter in SUMO2); alternate" evidence="3">
    <location>
        <position position="1043"/>
    </location>
</feature>
<feature type="non-consecutive residues" evidence="9">
    <location>
        <begin position="14"/>
        <end position="15"/>
    </location>
</feature>
<feature type="non-terminal residue" evidence="11">
    <location>
        <position position="1"/>
    </location>
</feature>